<sequence>MGFTCPNSDCLYSRSEWSNRALREEGLSFSMRCPGACCGAMLVRKQQEPEAVDQRHSPERVRIAPHQNVCAGLPGVGPSKCPKHSQVPLAPKSKSVPARATVSASPLKKQHCDVVVTVGPPADLELVYPALVSKGSANPPKVGKKSFNEALLEKRAAYQVRTAVPPPGPIRVVKTAATPVKVEKVRFPKGAVAFNGANFIDAKGYVVLSAGALKILRGVQKLRRQQARSARRMAACRRVRLAVFAARLPSLLRKADEATSGGFKYVDLNAPRVVRKAEKRPKKKPAKKAVRPASPVEEEINWDDFIIPESERTASPMKEEKPKRSLVPNSLGFGWWRPASGNLWDVVSQCQRACEGTFLEASAEACLVRAGVDDVALSVWARISKSVVQLSAYYDVNTLLENYTALSECTMDELQSVAVQLDSEYQELGPPTHFTCGLSNWARGAGKILYNFVAPTVEGIAGAGCRIVERAYELSKTVIDEIFSKMKSLFYDCFGNLFGHLNVLLSTIDSFWARASTWIMNILEKTHDCLKVLRDSAVWSLLLILVGGLILLSERFLQSIGIISKPGTILGIFLATFLGIFGYTFFRKDDTLVSDLLCAFKIAITNLFRTKPGPPGSPIIVDGDVVIPESAVAMSTCSFMGGLDIAIAAIGNVGASILGFKVGALQYAAKIATCLDQLRKGKDVLKEMTCWIIETLGALWNKMTGREATFFDEVSAIVAVDIREWLEESQNLCLAAQTFSIGDKIVLEQCERLIADGHKLLRGMGDADRKLSSSFLSTVQRKVSDLEKIHTQSVRAGYFEGRRMEPFWVYIHGPSHCGKSLLMEPMSRELLRAGGFSESSIYTKNSCDKYWSRYRRQACVQIDDLSAGKTDPSLESQLINLVASKEVPLDMAEVEDKGILFDSAILVTSSNTAHVPTNANVNHAEAYKNRMNVVIQCRRKPEYSPMGMELEGTFQPFDPRNPQASIECMLQHRETHAPITGWISAGAAMAEAVNQFRLHREKEMILQSNHLSSFRPAHPIYTECATFLSMYARDASFVPPVDLGCKWEIPSGYMTIAAVDGRVFGFSQLGVCTEISKQMKFTEEMEQYTLDKFAPDITKTMASQSRFKLVGAFLKGMIREEDNVVSLTSLGPKSTATQREFFETLGLAERVYLRAVQKKVNKIRTDPAFDVEALHARLLSTIATSYEYVRTYGPKIFPILMGFVCVVFACYGFIMPLLSFASGGSAVGGMVAMEQIAAASVVSSGSSPVAHRNRAPPVQPRYARHRLAGASAEDAYAYEEMMVVLYVDSTVAPVVNAVRGPGRQFFNSHQALMIPNNSTVVAHFSTRDVVEIHWEHDVVRKGEKKDTEIIQYRCPSIPELPSRCKKYFEYDLERDFPGPFTLDASCYRMQSPGKIDIELVSWTDHDRELRTRPLVIADPFGEDRYRREIPQYIQYGRPDQLHDCGAICVAKIGGQHRIVGLVISTDKHNTGVGLLPSALHMTTCSLSYVPEEWEEAPRGLKKLGWNDRSELPHMPRKTQYVAVNEDLAIPFDNPKIPSVLVSDDPRTVGTPVEGKDPVLVAMEKFYEPMTDFTEEEVRPGQTEVSLFEQVCDDIVQTWFDAGAEFEDVEDDVVINGDDDFDKLIMDTSEGYPYVLERTHGEKGKTRYFEGGPGAYTLKPGTSVYNDYHKLQEEVQVEGGIPEMVCIECPKDELLVERKVLQKLGTRNFEILELPKNMLFRKKFLHWALFLSDMRWCLPCQVGIVVQGREWGLLMDRLAAKNSVAYNCDYSKFDGLMSCQVLDAIGKMVNKCYSNANPNLKKKGKGELPGSPPQLARYNLLMSIFGRKCLARSQVFEVRGGIRRGALTVLLNSVFNEILIRYVYKTVIPSPEFNRFETFVTLVVYGDDNLIAVDPSMQKIFTGEVIKKTLARKKITITDGSDKLSPVLEAKPLAQLDFLKRSFLVSDSGQVMPALDRTCIYSSLLYLRSADCDPIPLLHQNVQNALQELYYRQDREEFDNLRTFYLERLPMWRNGQHRLLDWNQCAEHWRARYTGCPSDNPAGVLDMLVDPRCKSFMLPAGPANWSMPIADRIFVCGPKFSASGPSYTLCFNRLAAGETGVQIKPVHAATQGAMPTAKFVESFRSIKKRPELELAISAYESGSNLYFKGCAPYNDIWACAISFCSAFGYAQKQVLLHMYDNCKRLGASSLRSYFNKSLVGDGCARRCEIHTTPAIAKQVERLLPQVQCKHCEYDPEFASKPTTQLRKCTDPGVDGGKAMYIVRGLGRTAAKLVCSDICDGHLMSCNTSFDKMVVNLFRRSCFKCL</sequence>
<protein>
    <recommendedName>
        <fullName>RNA1 polyprotein</fullName>
    </recommendedName>
    <alternativeName>
        <fullName>P1</fullName>
    </alternativeName>
    <component>
        <recommendedName>
            <fullName>P1A protein</fullName>
            <shortName>1A</shortName>
        </recommendedName>
        <alternativeName>
            <fullName>Protease cofactor</fullName>
        </alternativeName>
    </component>
    <component>
        <recommendedName>
            <fullName>Putative ATP-dependent helicase</fullName>
            <ecNumber>3.6.4.-</ecNumber>
        </recommendedName>
        <alternativeName>
            <fullName>1B</fullName>
        </alternativeName>
        <alternativeName>
            <fullName>Membrane-binding protein</fullName>
        </alternativeName>
        <alternativeName>
            <fullName>NTP-binding protein</fullName>
            <shortName>NTB</shortName>
        </alternativeName>
    </component>
    <component>
        <recommendedName>
            <fullName>Viral genome-linked protein</fullName>
        </recommendedName>
        <alternativeName>
            <fullName>1C-VPg</fullName>
        </alternativeName>
    </component>
    <component>
        <recommendedName>
            <fullName>Picornain 3C-like protease</fullName>
            <shortName>3C-like protease</shortName>
            <ecNumber>3.4.22.-</ecNumber>
        </recommendedName>
        <alternativeName>
            <fullName>1D-PRO</fullName>
        </alternativeName>
    </component>
    <component>
        <recommendedName>
            <fullName>RNA-directed RNA polymerase</fullName>
            <ecNumber>2.7.7.48</ecNumber>
        </recommendedName>
        <alternativeName>
            <fullName>1E-POL</fullName>
        </alternativeName>
    </component>
</protein>
<keyword id="KW-0067">ATP-binding</keyword>
<keyword id="KW-0191">Covalent protein-RNA linkage</keyword>
<keyword id="KW-0347">Helicase</keyword>
<keyword id="KW-1038">Host endoplasmic reticulum</keyword>
<keyword id="KW-1043">Host membrane</keyword>
<keyword id="KW-0378">Hydrolase</keyword>
<keyword id="KW-0472">Membrane</keyword>
<keyword id="KW-0547">Nucleotide-binding</keyword>
<keyword id="KW-0548">Nucleotidyltransferase</keyword>
<keyword id="KW-0645">Protease</keyword>
<keyword id="KW-0694">RNA-binding</keyword>
<keyword id="KW-0696">RNA-directed RNA polymerase</keyword>
<keyword id="KW-0788">Thiol protease</keyword>
<keyword id="KW-0808">Transferase</keyword>
<keyword id="KW-0812">Transmembrane</keyword>
<keyword id="KW-1133">Transmembrane helix</keyword>
<keyword id="KW-0693">Viral RNA replication</keyword>
<dbReference type="EC" id="3.6.4.-"/>
<dbReference type="EC" id="3.4.22.-"/>
<dbReference type="EC" id="2.7.7.48"/>
<dbReference type="EMBL" id="U50869">
    <property type="protein sequence ID" value="AAB03785.1"/>
    <property type="molecule type" value="Genomic_RNA"/>
</dbReference>
<dbReference type="RefSeq" id="NP_919040.1">
    <property type="nucleotide sequence ID" value="NC_005097.1"/>
</dbReference>
<dbReference type="SMR" id="Q88893"/>
<dbReference type="GeneID" id="2943107"/>
<dbReference type="KEGG" id="vg:2943107"/>
<dbReference type="Proteomes" id="UP000201113">
    <property type="component" value="Genome"/>
</dbReference>
<dbReference type="GO" id="GO:0044166">
    <property type="term" value="C:host cell endoplasmic reticulum lumen"/>
    <property type="evidence" value="ECO:0007669"/>
    <property type="project" value="UniProtKB-SubCell"/>
</dbReference>
<dbReference type="GO" id="GO:0044167">
    <property type="term" value="C:host cell endoplasmic reticulum membrane"/>
    <property type="evidence" value="ECO:0007669"/>
    <property type="project" value="UniProtKB-SubCell"/>
</dbReference>
<dbReference type="GO" id="GO:0016020">
    <property type="term" value="C:membrane"/>
    <property type="evidence" value="ECO:0007669"/>
    <property type="project" value="UniProtKB-KW"/>
</dbReference>
<dbReference type="GO" id="GO:0005524">
    <property type="term" value="F:ATP binding"/>
    <property type="evidence" value="ECO:0007669"/>
    <property type="project" value="UniProtKB-KW"/>
</dbReference>
<dbReference type="GO" id="GO:0004197">
    <property type="term" value="F:cysteine-type endopeptidase activity"/>
    <property type="evidence" value="ECO:0007669"/>
    <property type="project" value="InterPro"/>
</dbReference>
<dbReference type="GO" id="GO:0003723">
    <property type="term" value="F:RNA binding"/>
    <property type="evidence" value="ECO:0007669"/>
    <property type="project" value="UniProtKB-KW"/>
</dbReference>
<dbReference type="GO" id="GO:0003724">
    <property type="term" value="F:RNA helicase activity"/>
    <property type="evidence" value="ECO:0007669"/>
    <property type="project" value="InterPro"/>
</dbReference>
<dbReference type="GO" id="GO:0003968">
    <property type="term" value="F:RNA-directed RNA polymerase activity"/>
    <property type="evidence" value="ECO:0007669"/>
    <property type="project" value="UniProtKB-KW"/>
</dbReference>
<dbReference type="GO" id="GO:0006351">
    <property type="term" value="P:DNA-templated transcription"/>
    <property type="evidence" value="ECO:0007669"/>
    <property type="project" value="InterPro"/>
</dbReference>
<dbReference type="GO" id="GO:0006508">
    <property type="term" value="P:proteolysis"/>
    <property type="evidence" value="ECO:0007669"/>
    <property type="project" value="UniProtKB-KW"/>
</dbReference>
<dbReference type="GO" id="GO:0039694">
    <property type="term" value="P:viral RNA genome replication"/>
    <property type="evidence" value="ECO:0007669"/>
    <property type="project" value="InterPro"/>
</dbReference>
<dbReference type="Gene3D" id="3.30.70.270">
    <property type="match status" value="1"/>
</dbReference>
<dbReference type="InterPro" id="IPR043502">
    <property type="entry name" value="DNA/RNA_pol_sf"/>
</dbReference>
<dbReference type="InterPro" id="IPR000605">
    <property type="entry name" value="Helicase_SF3_ssDNA/RNA_vir"/>
</dbReference>
<dbReference type="InterPro" id="IPR014759">
    <property type="entry name" value="Helicase_SF3_ssRNA_vir"/>
</dbReference>
<dbReference type="InterPro" id="IPR044067">
    <property type="entry name" value="PCV_3C_PRO"/>
</dbReference>
<dbReference type="InterPro" id="IPR043128">
    <property type="entry name" value="Rev_trsase/Diguanyl_cyclase"/>
</dbReference>
<dbReference type="InterPro" id="IPR001205">
    <property type="entry name" value="RNA-dir_pol_C"/>
</dbReference>
<dbReference type="InterPro" id="IPR007094">
    <property type="entry name" value="RNA-dir_pol_PSvirus"/>
</dbReference>
<dbReference type="Pfam" id="PF00680">
    <property type="entry name" value="RdRP_1"/>
    <property type="match status" value="1"/>
</dbReference>
<dbReference type="Pfam" id="PF00910">
    <property type="entry name" value="RNA_helicase"/>
    <property type="match status" value="1"/>
</dbReference>
<dbReference type="SUPFAM" id="SSF56672">
    <property type="entry name" value="DNA/RNA polymerases"/>
    <property type="match status" value="1"/>
</dbReference>
<dbReference type="PROSITE" id="PS51874">
    <property type="entry name" value="PCV_3C_PRO"/>
    <property type="match status" value="1"/>
</dbReference>
<dbReference type="PROSITE" id="PS50507">
    <property type="entry name" value="RDRP_SSRNA_POS"/>
    <property type="match status" value="1"/>
</dbReference>
<dbReference type="PROSITE" id="PS51218">
    <property type="entry name" value="SF3_HELICASE_2"/>
    <property type="match status" value="1"/>
</dbReference>
<name>POL1_TRSV</name>
<organism>
    <name type="scientific">Tobacco ringspot virus</name>
    <name type="common">TobRV</name>
    <name type="synonym">TRSV</name>
    <dbReference type="NCBI Taxonomy" id="12282"/>
    <lineage>
        <taxon>Viruses</taxon>
        <taxon>Riboviria</taxon>
        <taxon>Orthornavirae</taxon>
        <taxon>Pisuviricota</taxon>
        <taxon>Pisoniviricetes</taxon>
        <taxon>Picornavirales</taxon>
        <taxon>Secoviridae</taxon>
        <taxon>Comovirinae</taxon>
        <taxon>Nepovirus</taxon>
        <taxon>Nepovirus nicotianae</taxon>
    </lineage>
</organism>
<organismHost>
    <name type="scientific">Anemonastrum</name>
    <dbReference type="NCBI Taxonomy" id="22868"/>
</organismHost>
<organismHost>
    <name type="scientific">Bacopa</name>
    <dbReference type="NCBI Taxonomy" id="90645"/>
</organismHost>
<organismHost>
    <name type="scientific">Capsicum annuum</name>
    <name type="common">Capsicum pepper</name>
    <dbReference type="NCBI Taxonomy" id="4072"/>
</organismHost>
<organismHost>
    <name type="scientific">Carica papaya</name>
    <name type="common">Papaya</name>
    <dbReference type="NCBI Taxonomy" id="3649"/>
</organismHost>
<organismHost>
    <name type="scientific">Citrullus lanatus</name>
    <name type="common">Watermelon</name>
    <name type="synonym">Citrullus vulgaris</name>
    <dbReference type="NCBI Taxonomy" id="3654"/>
</organismHost>
<organismHost>
    <name type="scientific">Cornus</name>
    <dbReference type="NCBI Taxonomy" id="4281"/>
</organismHost>
<organismHost>
    <name type="scientific">Cucumis melo</name>
    <name type="common">Muskmelon</name>
    <dbReference type="NCBI Taxonomy" id="3656"/>
</organismHost>
<organismHost>
    <name type="scientific">Cucumis sativus</name>
    <name type="common">Cucumber</name>
    <dbReference type="NCBI Taxonomy" id="3659"/>
</organismHost>
<organismHost>
    <name type="scientific">Daphne</name>
    <dbReference type="NCBI Taxonomy" id="66679"/>
</organismHost>
<organismHost>
    <name type="scientific">Fraxinus</name>
    <name type="common">ash trees</name>
    <dbReference type="NCBI Taxonomy" id="38871"/>
</organismHost>
<organismHost>
    <name type="scientific">Gladiolus</name>
    <dbReference type="NCBI Taxonomy" id="49747"/>
</organismHost>
<organismHost>
    <name type="scientific">Glycine max</name>
    <name type="common">Soybean</name>
    <name type="synonym">Glycine hispida</name>
    <dbReference type="NCBI Taxonomy" id="3847"/>
</organismHost>
<organismHost>
    <name type="scientific">Hemerocallis</name>
    <dbReference type="NCBI Taxonomy" id="16107"/>
</organismHost>
<organismHost>
    <name type="scientific">Hydrangea</name>
    <dbReference type="NCBI Taxonomy" id="23109"/>
</organismHost>
<organismHost>
    <name type="scientific">Impatiens walleriana</name>
    <dbReference type="NCBI Taxonomy" id="127142"/>
</organismHost>
<organismHost>
    <name type="scientific">Iris</name>
    <dbReference type="NCBI Taxonomy" id="26378"/>
</organismHost>
<organismHost>
    <name type="scientific">Lobelia</name>
    <dbReference type="NCBI Taxonomy" id="4382"/>
</organismHost>
<organismHost>
    <name type="scientific">Lupinus</name>
    <dbReference type="NCBI Taxonomy" id="3869"/>
</organismHost>
<organismHost>
    <name type="scientific">Malus domestica</name>
    <name type="common">Apple</name>
    <name type="synonym">Pyrus malus</name>
    <dbReference type="NCBI Taxonomy" id="3750"/>
</organismHost>
<organismHost>
    <name type="scientific">Malus pumila</name>
    <name type="common">Paradise apple</name>
    <dbReference type="NCBI Taxonomy" id="283210"/>
</organismHost>
<organismHost>
    <name type="scientific">Mentha</name>
    <dbReference type="NCBI Taxonomy" id="21819"/>
</organismHost>
<organismHost>
    <name type="scientific">Narcissus pseudonarcissus</name>
    <name type="common">Daffodil</name>
    <dbReference type="NCBI Taxonomy" id="39639"/>
</organismHost>
<organismHost>
    <name type="scientific">Nicotiana tabacum</name>
    <name type="common">Common tobacco</name>
    <dbReference type="NCBI Taxonomy" id="4097"/>
</organismHost>
<organismHost>
    <name type="scientific">Pelargonium</name>
    <dbReference type="NCBI Taxonomy" id="4030"/>
</organismHost>
<organismHost>
    <name type="scientific">Petunia</name>
    <dbReference type="NCBI Taxonomy" id="4101"/>
</organismHost>
<organismHost>
    <name type="scientific">Phaseolus vulgaris</name>
    <name type="common">Kidney bean</name>
    <name type="synonym">French bean</name>
    <dbReference type="NCBI Taxonomy" id="3885"/>
</organismHost>
<organismHost>
    <name type="scientific">Phlox subulata</name>
    <dbReference type="NCBI Taxonomy" id="103544"/>
</organismHost>
<organismHost>
    <name type="scientific">Portulaca</name>
    <dbReference type="NCBI Taxonomy" id="3582"/>
</organismHost>
<organismHost>
    <name type="scientific">Prunus avium</name>
    <name type="common">Cherry</name>
    <name type="synonym">Cerasus avium</name>
    <dbReference type="NCBI Taxonomy" id="42229"/>
</organismHost>
<organismHost>
    <name type="scientific">Prunus incisa</name>
    <dbReference type="NCBI Taxonomy" id="137206"/>
</organismHost>
<organismHost>
    <name type="scientific">Prunus persica</name>
    <name type="common">Peach</name>
    <name type="synonym">Amygdalus persica</name>
    <dbReference type="NCBI Taxonomy" id="3760"/>
</organismHost>
<organismHost>
    <name type="scientific">Prunus serrula</name>
    <dbReference type="NCBI Taxonomy" id="1358727"/>
</organismHost>
<organismHost>
    <name type="scientific">Prunus serrulata</name>
    <dbReference type="NCBI Taxonomy" id="97321"/>
</organismHost>
<organismHost>
    <name type="scientific">Pueraria montana</name>
    <dbReference type="NCBI Taxonomy" id="132459"/>
</organismHost>
<organismHost>
    <name type="scientific">Rubus</name>
    <name type="common">bramble</name>
    <dbReference type="NCBI Taxonomy" id="23216"/>
</organismHost>
<organismHost>
    <name type="scientific">Rubus fruticosus</name>
    <dbReference type="NCBI Taxonomy" id="211815"/>
</organismHost>
<organismHost>
    <name type="scientific">Solanum lycopersicum</name>
    <name type="common">Tomato</name>
    <name type="synonym">Lycopersicon esculentum</name>
    <dbReference type="NCBI Taxonomy" id="4081"/>
</organismHost>
<organismHost>
    <name type="scientific">Solanum melongena</name>
    <name type="common">eggplant</name>
    <dbReference type="NCBI Taxonomy" id="4111"/>
</organismHost>
<organismHost>
    <name type="scientific">Vaccinium corymbosum</name>
    <name type="common">Highbush blueberry</name>
    <dbReference type="NCBI Taxonomy" id="69266"/>
</organismHost>
<organismHost>
    <name type="scientific">Vigna unguiculata</name>
    <name type="common">Cowpea</name>
    <dbReference type="NCBI Taxonomy" id="3917"/>
</organismHost>
<organismHost>
    <name type="scientific">Vitis vinifera</name>
    <name type="common">Grape</name>
    <dbReference type="NCBI Taxonomy" id="29760"/>
</organismHost>
<proteinExistence type="inferred from homology"/>
<comment type="function">
    <text evidence="1">Picornain 3C-like protease is a thiol protease that cleaves the P1 and P2 polyproteins.</text>
</comment>
<comment type="catalytic activity">
    <reaction evidence="3">
        <text>RNA(n) + a ribonucleoside 5'-triphosphate = RNA(n+1) + diphosphate</text>
        <dbReference type="Rhea" id="RHEA:21248"/>
        <dbReference type="Rhea" id="RHEA-COMP:14527"/>
        <dbReference type="Rhea" id="RHEA-COMP:17342"/>
        <dbReference type="ChEBI" id="CHEBI:33019"/>
        <dbReference type="ChEBI" id="CHEBI:61557"/>
        <dbReference type="ChEBI" id="CHEBI:140395"/>
        <dbReference type="EC" id="2.7.7.48"/>
    </reaction>
</comment>
<comment type="subcellular location">
    <molecule>Viral genome-linked protein</molecule>
    <subcellularLocation>
        <location evidence="1">Host endoplasmic reticulum lumen</location>
    </subcellularLocation>
</comment>
<comment type="subcellular location">
    <molecule>Putative ATP-dependent helicase</molecule>
    <subcellularLocation>
        <location evidence="1">Host endoplasmic reticulum membrane</location>
        <topology evidence="1">Single-pass membrane protein</topology>
    </subcellularLocation>
</comment>
<comment type="PTM">
    <text evidence="1">Specific enzymatic cleavages by picornain 3C-like protease in vivo yield mature proteins. Picornain 3C-like protease is autocatalytically processed (By similarity).</text>
</comment>
<comment type="PTM">
    <text evidence="1">VPg is uridylylated by the polymerase and is covalently linked to the 5'-end of genomic RNA. This uridylylated form acts as a nucleotide-peptide primer for the polymerase (By similarity).</text>
</comment>
<comment type="similarity">
    <text evidence="6">Belongs to the nepoviruses RNA1 polyprotein family.</text>
</comment>
<feature type="chain" id="PRO_0000037055" description="P1A protein" evidence="2">
    <location>
        <begin position="1"/>
        <end position="587"/>
    </location>
</feature>
<feature type="chain" id="PRO_0000037056" description="Putative ATP-dependent helicase" evidence="2">
    <location>
        <begin position="588"/>
        <end position="1243"/>
    </location>
</feature>
<feature type="chain" id="PRO_0000037057" description="Viral genome-linked protein" evidence="1">
    <location>
        <begin position="1244"/>
        <end position="1267"/>
    </location>
</feature>
<feature type="chain" id="PRO_0000037058" description="Picornain 3C-like protease" evidence="2">
    <location>
        <begin position="1268"/>
        <end position="1484"/>
    </location>
</feature>
<feature type="chain" id="PRO_0000037059" description="RNA-directed RNA polymerase" evidence="2">
    <location>
        <begin position="1485"/>
        <end position="2304"/>
    </location>
</feature>
<feature type="topological domain" description="Cytoplasmic" evidence="2">
    <location>
        <begin position="588"/>
        <end position="1195"/>
    </location>
</feature>
<feature type="transmembrane region" description="Helical" evidence="2">
    <location>
        <begin position="1196"/>
        <end position="1216"/>
    </location>
</feature>
<feature type="topological domain" description="Lumenal" evidence="2">
    <location>
        <begin position="1217"/>
        <end position="1243"/>
    </location>
</feature>
<feature type="domain" description="SF3 helicase" evidence="4">
    <location>
        <begin position="786"/>
        <end position="950"/>
    </location>
</feature>
<feature type="domain" description="Peptidase C3" evidence="5">
    <location>
        <begin position="1269"/>
        <end position="1482"/>
    </location>
</feature>
<feature type="domain" description="RdRp catalytic" evidence="3">
    <location>
        <begin position="1762"/>
        <end position="1900"/>
    </location>
</feature>
<feature type="active site" description="For picornain 3C-like protease activity" evidence="5">
    <location>
        <position position="1309"/>
    </location>
</feature>
<feature type="active site" description="For picornain 3C-like protease activity" evidence="5">
    <location>
        <position position="1348"/>
    </location>
</feature>
<feature type="active site" description="For picornain 3C-like protease activity" evidence="5">
    <location>
        <position position="1444"/>
    </location>
</feature>
<feature type="binding site" evidence="4">
    <location>
        <begin position="813"/>
        <end position="820"/>
    </location>
    <ligand>
        <name>ATP</name>
        <dbReference type="ChEBI" id="CHEBI:30616"/>
    </ligand>
</feature>
<accession>Q88893</accession>
<reference key="1">
    <citation type="journal article" date="1996" name="Virology">
        <title>Chemical cleavage of 5'-linked protein from tobacco ringspot virus genomic RNAs and characterization of the protein-RNA linkage.</title>
        <authorList>
            <person name="Zalloua P.A."/>
            <person name="Buzayan J.M."/>
            <person name="Bruening G."/>
        </authorList>
    </citation>
    <scope>NUCLEOTIDE SEQUENCE [GENOMIC RNA]</scope>
    <source>
        <strain>Bud Blight</strain>
    </source>
</reference>
<evidence type="ECO:0000250" key="1"/>
<evidence type="ECO:0000255" key="2"/>
<evidence type="ECO:0000255" key="3">
    <source>
        <dbReference type="PROSITE-ProRule" id="PRU00539"/>
    </source>
</evidence>
<evidence type="ECO:0000255" key="4">
    <source>
        <dbReference type="PROSITE-ProRule" id="PRU00551"/>
    </source>
</evidence>
<evidence type="ECO:0000255" key="5">
    <source>
        <dbReference type="PROSITE-ProRule" id="PRU01222"/>
    </source>
</evidence>
<evidence type="ECO:0000305" key="6"/>